<keyword id="KW-0963">Cytoplasm</keyword>
<keyword id="KW-0269">Exonuclease</keyword>
<keyword id="KW-0378">Hydrolase</keyword>
<keyword id="KW-0540">Nuclease</keyword>
<keyword id="KW-1185">Reference proteome</keyword>
<gene>
    <name evidence="1" type="primary">xseB</name>
    <name type="ordered locus">PHZ_c0910</name>
</gene>
<dbReference type="EC" id="3.1.11.6" evidence="1"/>
<dbReference type="EMBL" id="CP000747">
    <property type="protein sequence ID" value="ACG77324.1"/>
    <property type="molecule type" value="Genomic_DNA"/>
</dbReference>
<dbReference type="RefSeq" id="WP_012521472.1">
    <property type="nucleotide sequence ID" value="NC_011144.1"/>
</dbReference>
<dbReference type="SMR" id="B4RGV8"/>
<dbReference type="STRING" id="450851.PHZ_c0910"/>
<dbReference type="KEGG" id="pzu:PHZ_c0910"/>
<dbReference type="eggNOG" id="COG1722">
    <property type="taxonomic scope" value="Bacteria"/>
</dbReference>
<dbReference type="HOGENOM" id="CLU_145918_0_3_5"/>
<dbReference type="OrthoDB" id="9808145at2"/>
<dbReference type="Proteomes" id="UP000001868">
    <property type="component" value="Chromosome"/>
</dbReference>
<dbReference type="GO" id="GO:0005829">
    <property type="term" value="C:cytosol"/>
    <property type="evidence" value="ECO:0007669"/>
    <property type="project" value="TreeGrafter"/>
</dbReference>
<dbReference type="GO" id="GO:0009318">
    <property type="term" value="C:exodeoxyribonuclease VII complex"/>
    <property type="evidence" value="ECO:0007669"/>
    <property type="project" value="InterPro"/>
</dbReference>
<dbReference type="GO" id="GO:0008855">
    <property type="term" value="F:exodeoxyribonuclease VII activity"/>
    <property type="evidence" value="ECO:0007669"/>
    <property type="project" value="UniProtKB-UniRule"/>
</dbReference>
<dbReference type="GO" id="GO:0006308">
    <property type="term" value="P:DNA catabolic process"/>
    <property type="evidence" value="ECO:0007669"/>
    <property type="project" value="UniProtKB-UniRule"/>
</dbReference>
<dbReference type="Gene3D" id="1.10.287.1040">
    <property type="entry name" value="Exonuclease VII, small subunit"/>
    <property type="match status" value="1"/>
</dbReference>
<dbReference type="HAMAP" id="MF_00337">
    <property type="entry name" value="Exonuc_7_S"/>
    <property type="match status" value="1"/>
</dbReference>
<dbReference type="InterPro" id="IPR003761">
    <property type="entry name" value="Exonuc_VII_S"/>
</dbReference>
<dbReference type="InterPro" id="IPR037004">
    <property type="entry name" value="Exonuc_VII_ssu_sf"/>
</dbReference>
<dbReference type="NCBIfam" id="NF002139">
    <property type="entry name" value="PRK00977.1-3"/>
    <property type="match status" value="1"/>
</dbReference>
<dbReference type="NCBIfam" id="TIGR01280">
    <property type="entry name" value="xseB"/>
    <property type="match status" value="1"/>
</dbReference>
<dbReference type="PANTHER" id="PTHR34137">
    <property type="entry name" value="EXODEOXYRIBONUCLEASE 7 SMALL SUBUNIT"/>
    <property type="match status" value="1"/>
</dbReference>
<dbReference type="PANTHER" id="PTHR34137:SF1">
    <property type="entry name" value="EXODEOXYRIBONUCLEASE 7 SMALL SUBUNIT"/>
    <property type="match status" value="1"/>
</dbReference>
<dbReference type="Pfam" id="PF02609">
    <property type="entry name" value="Exonuc_VII_S"/>
    <property type="match status" value="1"/>
</dbReference>
<dbReference type="SUPFAM" id="SSF116842">
    <property type="entry name" value="XseB-like"/>
    <property type="match status" value="1"/>
</dbReference>
<comment type="function">
    <text evidence="1">Bidirectionally degrades single-stranded DNA into large acid-insoluble oligonucleotides, which are then degraded further into small acid-soluble oligonucleotides.</text>
</comment>
<comment type="catalytic activity">
    <reaction evidence="1">
        <text>Exonucleolytic cleavage in either 5'- to 3'- or 3'- to 5'-direction to yield nucleoside 5'-phosphates.</text>
        <dbReference type="EC" id="3.1.11.6"/>
    </reaction>
</comment>
<comment type="subunit">
    <text evidence="1">Heterooligomer composed of large and small subunits.</text>
</comment>
<comment type="subcellular location">
    <subcellularLocation>
        <location evidence="1">Cytoplasm</location>
    </subcellularLocation>
</comment>
<comment type="similarity">
    <text evidence="1">Belongs to the XseB family.</text>
</comment>
<reference key="1">
    <citation type="journal article" date="2008" name="BMC Genomics">
        <title>Complete genome of Phenylobacterium zucineum - a novel facultative intracellular bacterium isolated from human erythroleukemia cell line K562.</title>
        <authorList>
            <person name="Luo Y."/>
            <person name="Xu X."/>
            <person name="Ding Z."/>
            <person name="Liu Z."/>
            <person name="Zhang B."/>
            <person name="Yan Z."/>
            <person name="Sun J."/>
            <person name="Hu S."/>
            <person name="Hu X."/>
        </authorList>
    </citation>
    <scope>NUCLEOTIDE SEQUENCE [LARGE SCALE GENOMIC DNA]</scope>
    <source>
        <strain>HLK1</strain>
    </source>
</reference>
<proteinExistence type="inferred from homology"/>
<name>EX7S_PHEZH</name>
<protein>
    <recommendedName>
        <fullName evidence="1">Exodeoxyribonuclease 7 small subunit</fullName>
        <ecNumber evidence="1">3.1.11.6</ecNumber>
    </recommendedName>
    <alternativeName>
        <fullName evidence="1">Exodeoxyribonuclease VII small subunit</fullName>
        <shortName evidence="1">Exonuclease VII small subunit</shortName>
    </alternativeName>
</protein>
<feature type="chain" id="PRO_1000200258" description="Exodeoxyribonuclease 7 small subunit">
    <location>
        <begin position="1"/>
        <end position="80"/>
    </location>
</feature>
<accession>B4RGV8</accession>
<organism>
    <name type="scientific">Phenylobacterium zucineum (strain HLK1)</name>
    <dbReference type="NCBI Taxonomy" id="450851"/>
    <lineage>
        <taxon>Bacteria</taxon>
        <taxon>Pseudomonadati</taxon>
        <taxon>Pseudomonadota</taxon>
        <taxon>Alphaproteobacteria</taxon>
        <taxon>Caulobacterales</taxon>
        <taxon>Caulobacteraceae</taxon>
        <taxon>Phenylobacterium</taxon>
    </lineage>
</organism>
<evidence type="ECO:0000255" key="1">
    <source>
        <dbReference type="HAMAP-Rule" id="MF_00337"/>
    </source>
</evidence>
<sequence>MSEPADIAAMTFEQALAELEQIVARLESGQAPLEDSIRMYERGAALKAHCETRLEAARLRVEKIVMGAGGAPASEPAEFG</sequence>